<name>XERC_COREF</name>
<accession>Q7ZAK0</accession>
<organism>
    <name type="scientific">Corynebacterium efficiens (strain DSM 44549 / YS-314 / AJ 12310 / JCM 11189 / NBRC 100395)</name>
    <dbReference type="NCBI Taxonomy" id="196164"/>
    <lineage>
        <taxon>Bacteria</taxon>
        <taxon>Bacillati</taxon>
        <taxon>Actinomycetota</taxon>
        <taxon>Actinomycetes</taxon>
        <taxon>Mycobacteriales</taxon>
        <taxon>Corynebacteriaceae</taxon>
        <taxon>Corynebacterium</taxon>
    </lineage>
</organism>
<protein>
    <recommendedName>
        <fullName evidence="1">Tyrosine recombinase XerC</fullName>
    </recommendedName>
</protein>
<proteinExistence type="inferred from homology"/>
<evidence type="ECO:0000255" key="1">
    <source>
        <dbReference type="HAMAP-Rule" id="MF_01808"/>
    </source>
</evidence>
<evidence type="ECO:0000255" key="2">
    <source>
        <dbReference type="PROSITE-ProRule" id="PRU01246"/>
    </source>
</evidence>
<evidence type="ECO:0000255" key="3">
    <source>
        <dbReference type="PROSITE-ProRule" id="PRU01248"/>
    </source>
</evidence>
<gene>
    <name evidence="1" type="primary">xerC</name>
    <name type="ordered locus">CE1917</name>
</gene>
<sequence>MEPAGAGREGWDGTMGDDPRQSQMLEAIEDFCDYLILVVGRSDATVRGYRSDLRHMAATIPDLTEFTLPNLRAWLGRAVEEGKSRATLARRTASVKSFSTWAVKNGLISGDEAARLVSPKVTRNLPRVLGEVQAGEFMGSAAADTEDEFRRDSAILELLYATGMRVSELCGLDLGDVDHHRRMVRVLGKGDKERMIPFGKAAADALEQWLEARDRMAKVEDAMFVGVRGGRIDARQIRRIVDRTAQVAGADHLSPHSLRHTAATHLLDGGADLRQVQEMLGHSSLQTTQIYTHVSSQRLLEAFRQAHPRA</sequence>
<keyword id="KW-0131">Cell cycle</keyword>
<keyword id="KW-0132">Cell division</keyword>
<keyword id="KW-0159">Chromosome partition</keyword>
<keyword id="KW-0963">Cytoplasm</keyword>
<keyword id="KW-0229">DNA integration</keyword>
<keyword id="KW-0233">DNA recombination</keyword>
<keyword id="KW-0238">DNA-binding</keyword>
<keyword id="KW-1185">Reference proteome</keyword>
<comment type="function">
    <text evidence="1">Site-specific tyrosine recombinase, which acts by catalyzing the cutting and rejoining of the recombining DNA molecules. The XerC-XerD complex is essential to convert dimers of the bacterial chromosome into monomers to permit their segregation at cell division. It also contributes to the segregational stability of plasmids.</text>
</comment>
<comment type="subunit">
    <text evidence="1">Forms a cyclic heterotetrameric complex composed of two molecules of XerC and two molecules of XerD.</text>
</comment>
<comment type="subcellular location">
    <subcellularLocation>
        <location evidence="1">Cytoplasm</location>
    </subcellularLocation>
</comment>
<comment type="similarity">
    <text evidence="1">Belongs to the 'phage' integrase family. XerC subfamily.</text>
</comment>
<dbReference type="EMBL" id="BA000035">
    <property type="protein sequence ID" value="BAC18727.1"/>
    <property type="molecule type" value="Genomic_DNA"/>
</dbReference>
<dbReference type="SMR" id="Q7ZAK0"/>
<dbReference type="STRING" id="196164.gene:10742345"/>
<dbReference type="KEGG" id="cef:CE1917"/>
<dbReference type="eggNOG" id="COG4974">
    <property type="taxonomic scope" value="Bacteria"/>
</dbReference>
<dbReference type="HOGENOM" id="CLU_027562_9_0_11"/>
<dbReference type="OrthoDB" id="9801717at2"/>
<dbReference type="Proteomes" id="UP000001409">
    <property type="component" value="Chromosome"/>
</dbReference>
<dbReference type="GO" id="GO:0005737">
    <property type="term" value="C:cytoplasm"/>
    <property type="evidence" value="ECO:0007669"/>
    <property type="project" value="UniProtKB-SubCell"/>
</dbReference>
<dbReference type="GO" id="GO:0003677">
    <property type="term" value="F:DNA binding"/>
    <property type="evidence" value="ECO:0007669"/>
    <property type="project" value="UniProtKB-KW"/>
</dbReference>
<dbReference type="GO" id="GO:0009037">
    <property type="term" value="F:tyrosine-based site-specific recombinase activity"/>
    <property type="evidence" value="ECO:0007669"/>
    <property type="project" value="UniProtKB-UniRule"/>
</dbReference>
<dbReference type="GO" id="GO:0051301">
    <property type="term" value="P:cell division"/>
    <property type="evidence" value="ECO:0007669"/>
    <property type="project" value="UniProtKB-KW"/>
</dbReference>
<dbReference type="GO" id="GO:0007059">
    <property type="term" value="P:chromosome segregation"/>
    <property type="evidence" value="ECO:0007669"/>
    <property type="project" value="UniProtKB-UniRule"/>
</dbReference>
<dbReference type="GO" id="GO:0006313">
    <property type="term" value="P:DNA transposition"/>
    <property type="evidence" value="ECO:0007669"/>
    <property type="project" value="UniProtKB-UniRule"/>
</dbReference>
<dbReference type="CDD" id="cd00798">
    <property type="entry name" value="INT_XerDC_C"/>
    <property type="match status" value="1"/>
</dbReference>
<dbReference type="Gene3D" id="1.10.150.130">
    <property type="match status" value="1"/>
</dbReference>
<dbReference type="Gene3D" id="1.10.443.10">
    <property type="entry name" value="Intergrase catalytic core"/>
    <property type="match status" value="1"/>
</dbReference>
<dbReference type="HAMAP" id="MF_01808">
    <property type="entry name" value="Recomb_XerC_XerD"/>
    <property type="match status" value="1"/>
</dbReference>
<dbReference type="InterPro" id="IPR044068">
    <property type="entry name" value="CB"/>
</dbReference>
<dbReference type="InterPro" id="IPR011010">
    <property type="entry name" value="DNA_brk_join_enz"/>
</dbReference>
<dbReference type="InterPro" id="IPR013762">
    <property type="entry name" value="Integrase-like_cat_sf"/>
</dbReference>
<dbReference type="InterPro" id="IPR002104">
    <property type="entry name" value="Integrase_catalytic"/>
</dbReference>
<dbReference type="InterPro" id="IPR010998">
    <property type="entry name" value="Integrase_recombinase_N"/>
</dbReference>
<dbReference type="InterPro" id="IPR004107">
    <property type="entry name" value="Integrase_SAM-like_N"/>
</dbReference>
<dbReference type="InterPro" id="IPR023009">
    <property type="entry name" value="Tyrosine_recombinase_XerC/XerD"/>
</dbReference>
<dbReference type="InterPro" id="IPR050090">
    <property type="entry name" value="Tyrosine_recombinase_XerCD"/>
</dbReference>
<dbReference type="NCBIfam" id="NF001399">
    <property type="entry name" value="PRK00283.1"/>
    <property type="match status" value="1"/>
</dbReference>
<dbReference type="PANTHER" id="PTHR30349">
    <property type="entry name" value="PHAGE INTEGRASE-RELATED"/>
    <property type="match status" value="1"/>
</dbReference>
<dbReference type="PANTHER" id="PTHR30349:SF77">
    <property type="entry name" value="TYROSINE RECOMBINASE XERC"/>
    <property type="match status" value="1"/>
</dbReference>
<dbReference type="Pfam" id="PF02899">
    <property type="entry name" value="Phage_int_SAM_1"/>
    <property type="match status" value="1"/>
</dbReference>
<dbReference type="Pfam" id="PF00589">
    <property type="entry name" value="Phage_integrase"/>
    <property type="match status" value="1"/>
</dbReference>
<dbReference type="SUPFAM" id="SSF56349">
    <property type="entry name" value="DNA breaking-rejoining enzymes"/>
    <property type="match status" value="1"/>
</dbReference>
<dbReference type="SUPFAM" id="SSF47823">
    <property type="entry name" value="lambda integrase-like, N-terminal domain"/>
    <property type="match status" value="1"/>
</dbReference>
<dbReference type="PROSITE" id="PS51900">
    <property type="entry name" value="CB"/>
    <property type="match status" value="1"/>
</dbReference>
<dbReference type="PROSITE" id="PS51898">
    <property type="entry name" value="TYR_RECOMBINASE"/>
    <property type="match status" value="1"/>
</dbReference>
<reference key="1">
    <citation type="journal article" date="2003" name="Genome Res.">
        <title>Comparative complete genome sequence analysis of the amino acid replacements responsible for the thermostability of Corynebacterium efficiens.</title>
        <authorList>
            <person name="Nishio Y."/>
            <person name="Nakamura Y."/>
            <person name="Kawarabayasi Y."/>
            <person name="Usuda Y."/>
            <person name="Kimura E."/>
            <person name="Sugimoto S."/>
            <person name="Matsui K."/>
            <person name="Yamagishi A."/>
            <person name="Kikuchi H."/>
            <person name="Ikeo K."/>
            <person name="Gojobori T."/>
        </authorList>
    </citation>
    <scope>NUCLEOTIDE SEQUENCE [LARGE SCALE GENOMIC DNA]</scope>
    <source>
        <strain>DSM 44549 / YS-314 / AJ 12310 / JCM 11189 / NBRC 100395</strain>
    </source>
</reference>
<feature type="chain" id="PRO_0000095292" description="Tyrosine recombinase XerC">
    <location>
        <begin position="1"/>
        <end position="310"/>
    </location>
</feature>
<feature type="domain" description="Core-binding (CB)" evidence="3">
    <location>
        <begin position="22"/>
        <end position="103"/>
    </location>
</feature>
<feature type="domain" description="Tyr recombinase" evidence="2">
    <location>
        <begin position="124"/>
        <end position="304"/>
    </location>
</feature>
<feature type="active site" evidence="1">
    <location>
        <position position="165"/>
    </location>
</feature>
<feature type="active site" evidence="1">
    <location>
        <position position="189"/>
    </location>
</feature>
<feature type="active site" evidence="1">
    <location>
        <position position="256"/>
    </location>
</feature>
<feature type="active site" evidence="1">
    <location>
        <position position="259"/>
    </location>
</feature>
<feature type="active site" evidence="1">
    <location>
        <position position="282"/>
    </location>
</feature>
<feature type="active site" description="O-(3'-phospho-DNA)-tyrosine intermediate" evidence="1">
    <location>
        <position position="291"/>
    </location>
</feature>